<feature type="chain" id="PRO_1000019770" description="Serine--tRNA ligase">
    <location>
        <begin position="1"/>
        <end position="426"/>
    </location>
</feature>
<feature type="binding site" evidence="1">
    <location>
        <begin position="233"/>
        <end position="235"/>
    </location>
    <ligand>
        <name>L-serine</name>
        <dbReference type="ChEBI" id="CHEBI:33384"/>
    </ligand>
</feature>
<feature type="binding site" evidence="1">
    <location>
        <begin position="264"/>
        <end position="266"/>
    </location>
    <ligand>
        <name>ATP</name>
        <dbReference type="ChEBI" id="CHEBI:30616"/>
    </ligand>
</feature>
<feature type="binding site" evidence="1">
    <location>
        <position position="287"/>
    </location>
    <ligand>
        <name>L-serine</name>
        <dbReference type="ChEBI" id="CHEBI:33384"/>
    </ligand>
</feature>
<feature type="binding site" evidence="1">
    <location>
        <begin position="351"/>
        <end position="354"/>
    </location>
    <ligand>
        <name>ATP</name>
        <dbReference type="ChEBI" id="CHEBI:30616"/>
    </ligand>
</feature>
<feature type="binding site" evidence="1">
    <location>
        <position position="387"/>
    </location>
    <ligand>
        <name>L-serine</name>
        <dbReference type="ChEBI" id="CHEBI:33384"/>
    </ligand>
</feature>
<keyword id="KW-0030">Aminoacyl-tRNA synthetase</keyword>
<keyword id="KW-0067">ATP-binding</keyword>
<keyword id="KW-0963">Cytoplasm</keyword>
<keyword id="KW-0436">Ligase</keyword>
<keyword id="KW-0547">Nucleotide-binding</keyword>
<keyword id="KW-0648">Protein biosynthesis</keyword>
<sequence length="426" mass="47244">MLDSKLLRTQLQDVADRLASRGFTLDVARIESLEAQRKVVQTRTEQLQAERNARSKSIGQAKQRGEDIAPLMADVERMGNELSEGKVELDGIQAELDALVLSIPNLPHESVPVGADEEGNVEVRRWGTPTAFDFEVKDHVALGEKFGWLDFETAAKLSGARFALLRGPIARLHRALAQFMINLHINEHGYEETYTPYLVQAPALQGTGQLPKFEEDLFKITREGEADLYLIPTAEVSLTNIVSGEILDAKQLPLKFVAHTPCFRSEAGASGRDTRGMIRQHQFDKVEMVQIVAPEDSMAALESLTGNAERVLQLLELPYRTLALCTGDMGFSAVKTYDLEVWIPSQDKYREISSCSNCGDFQARRMQARWRNPETGKPELVHTLNGSGLAVGRTLVAVLENYQQADGSIRVPEVLKPYMGGLEVIG</sequence>
<evidence type="ECO:0000255" key="1">
    <source>
        <dbReference type="HAMAP-Rule" id="MF_00176"/>
    </source>
</evidence>
<protein>
    <recommendedName>
        <fullName evidence="1">Serine--tRNA ligase</fullName>
        <ecNumber evidence="1">6.1.1.11</ecNumber>
    </recommendedName>
    <alternativeName>
        <fullName evidence="1">Seryl-tRNA synthetase</fullName>
        <shortName evidence="1">SerRS</shortName>
    </alternativeName>
    <alternativeName>
        <fullName evidence="1">Seryl-tRNA(Ser/Sec) synthetase</fullName>
    </alternativeName>
</protein>
<dbReference type="EC" id="6.1.1.11" evidence="1"/>
<dbReference type="EMBL" id="CP000058">
    <property type="protein sequence ID" value="AAZ37664.1"/>
    <property type="molecule type" value="Genomic_DNA"/>
</dbReference>
<dbReference type="RefSeq" id="WP_002553992.1">
    <property type="nucleotide sequence ID" value="NC_005773.3"/>
</dbReference>
<dbReference type="SMR" id="Q48H74"/>
<dbReference type="GeneID" id="69860115"/>
<dbReference type="KEGG" id="psp:PSPPH_3089"/>
<dbReference type="eggNOG" id="COG0172">
    <property type="taxonomic scope" value="Bacteria"/>
</dbReference>
<dbReference type="HOGENOM" id="CLU_023797_1_1_6"/>
<dbReference type="UniPathway" id="UPA00906">
    <property type="reaction ID" value="UER00895"/>
</dbReference>
<dbReference type="Proteomes" id="UP000000551">
    <property type="component" value="Chromosome"/>
</dbReference>
<dbReference type="GO" id="GO:0005737">
    <property type="term" value="C:cytoplasm"/>
    <property type="evidence" value="ECO:0007669"/>
    <property type="project" value="UniProtKB-SubCell"/>
</dbReference>
<dbReference type="GO" id="GO:0005524">
    <property type="term" value="F:ATP binding"/>
    <property type="evidence" value="ECO:0007669"/>
    <property type="project" value="UniProtKB-UniRule"/>
</dbReference>
<dbReference type="GO" id="GO:0004828">
    <property type="term" value="F:serine-tRNA ligase activity"/>
    <property type="evidence" value="ECO:0007669"/>
    <property type="project" value="UniProtKB-UniRule"/>
</dbReference>
<dbReference type="GO" id="GO:0016260">
    <property type="term" value="P:selenocysteine biosynthetic process"/>
    <property type="evidence" value="ECO:0007669"/>
    <property type="project" value="UniProtKB-UniRule"/>
</dbReference>
<dbReference type="GO" id="GO:0006434">
    <property type="term" value="P:seryl-tRNA aminoacylation"/>
    <property type="evidence" value="ECO:0007669"/>
    <property type="project" value="UniProtKB-UniRule"/>
</dbReference>
<dbReference type="CDD" id="cd00770">
    <property type="entry name" value="SerRS_core"/>
    <property type="match status" value="1"/>
</dbReference>
<dbReference type="Gene3D" id="3.30.930.10">
    <property type="entry name" value="Bira Bifunctional Protein, Domain 2"/>
    <property type="match status" value="1"/>
</dbReference>
<dbReference type="Gene3D" id="1.10.287.40">
    <property type="entry name" value="Serine-tRNA synthetase, tRNA binding domain"/>
    <property type="match status" value="1"/>
</dbReference>
<dbReference type="HAMAP" id="MF_00176">
    <property type="entry name" value="Ser_tRNA_synth_type1"/>
    <property type="match status" value="1"/>
</dbReference>
<dbReference type="InterPro" id="IPR002314">
    <property type="entry name" value="aa-tRNA-synt_IIb"/>
</dbReference>
<dbReference type="InterPro" id="IPR006195">
    <property type="entry name" value="aa-tRNA-synth_II"/>
</dbReference>
<dbReference type="InterPro" id="IPR045864">
    <property type="entry name" value="aa-tRNA-synth_II/BPL/LPL"/>
</dbReference>
<dbReference type="InterPro" id="IPR002317">
    <property type="entry name" value="Ser-tRNA-ligase_type_1"/>
</dbReference>
<dbReference type="InterPro" id="IPR015866">
    <property type="entry name" value="Ser-tRNA-synth_1_N"/>
</dbReference>
<dbReference type="InterPro" id="IPR042103">
    <property type="entry name" value="SerRS_1_N_sf"/>
</dbReference>
<dbReference type="InterPro" id="IPR033729">
    <property type="entry name" value="SerRS_core"/>
</dbReference>
<dbReference type="InterPro" id="IPR010978">
    <property type="entry name" value="tRNA-bd_arm"/>
</dbReference>
<dbReference type="NCBIfam" id="TIGR00414">
    <property type="entry name" value="serS"/>
    <property type="match status" value="1"/>
</dbReference>
<dbReference type="PANTHER" id="PTHR43697:SF1">
    <property type="entry name" value="SERINE--TRNA LIGASE"/>
    <property type="match status" value="1"/>
</dbReference>
<dbReference type="PANTHER" id="PTHR43697">
    <property type="entry name" value="SERYL-TRNA SYNTHETASE"/>
    <property type="match status" value="1"/>
</dbReference>
<dbReference type="Pfam" id="PF02403">
    <property type="entry name" value="Seryl_tRNA_N"/>
    <property type="match status" value="1"/>
</dbReference>
<dbReference type="Pfam" id="PF00587">
    <property type="entry name" value="tRNA-synt_2b"/>
    <property type="match status" value="1"/>
</dbReference>
<dbReference type="PIRSF" id="PIRSF001529">
    <property type="entry name" value="Ser-tRNA-synth_IIa"/>
    <property type="match status" value="1"/>
</dbReference>
<dbReference type="PRINTS" id="PR00981">
    <property type="entry name" value="TRNASYNTHSER"/>
</dbReference>
<dbReference type="SUPFAM" id="SSF55681">
    <property type="entry name" value="Class II aaRS and biotin synthetases"/>
    <property type="match status" value="1"/>
</dbReference>
<dbReference type="SUPFAM" id="SSF46589">
    <property type="entry name" value="tRNA-binding arm"/>
    <property type="match status" value="1"/>
</dbReference>
<dbReference type="PROSITE" id="PS50862">
    <property type="entry name" value="AA_TRNA_LIGASE_II"/>
    <property type="match status" value="1"/>
</dbReference>
<name>SYS_PSE14</name>
<reference key="1">
    <citation type="journal article" date="2005" name="J. Bacteriol.">
        <title>Whole-genome sequence analysis of Pseudomonas syringae pv. phaseolicola 1448A reveals divergence among pathovars in genes involved in virulence and transposition.</title>
        <authorList>
            <person name="Joardar V."/>
            <person name="Lindeberg M."/>
            <person name="Jackson R.W."/>
            <person name="Selengut J."/>
            <person name="Dodson R."/>
            <person name="Brinkac L.M."/>
            <person name="Daugherty S.C."/>
            <person name="DeBoy R.T."/>
            <person name="Durkin A.S."/>
            <person name="Gwinn Giglio M."/>
            <person name="Madupu R."/>
            <person name="Nelson W.C."/>
            <person name="Rosovitz M.J."/>
            <person name="Sullivan S.A."/>
            <person name="Crabtree J."/>
            <person name="Creasy T."/>
            <person name="Davidsen T.M."/>
            <person name="Haft D.H."/>
            <person name="Zafar N."/>
            <person name="Zhou L."/>
            <person name="Halpin R."/>
            <person name="Holley T."/>
            <person name="Khouri H.M."/>
            <person name="Feldblyum T.V."/>
            <person name="White O."/>
            <person name="Fraser C.M."/>
            <person name="Chatterjee A.K."/>
            <person name="Cartinhour S."/>
            <person name="Schneider D."/>
            <person name="Mansfield J.W."/>
            <person name="Collmer A."/>
            <person name="Buell R."/>
        </authorList>
    </citation>
    <scope>NUCLEOTIDE SEQUENCE [LARGE SCALE GENOMIC DNA]</scope>
    <source>
        <strain>1448A / Race 6</strain>
    </source>
</reference>
<comment type="function">
    <text evidence="1">Catalyzes the attachment of serine to tRNA(Ser). Is also able to aminoacylate tRNA(Sec) with serine, to form the misacylated tRNA L-seryl-tRNA(Sec), which will be further converted into selenocysteinyl-tRNA(Sec).</text>
</comment>
<comment type="catalytic activity">
    <reaction evidence="1">
        <text>tRNA(Ser) + L-serine + ATP = L-seryl-tRNA(Ser) + AMP + diphosphate + H(+)</text>
        <dbReference type="Rhea" id="RHEA:12292"/>
        <dbReference type="Rhea" id="RHEA-COMP:9669"/>
        <dbReference type="Rhea" id="RHEA-COMP:9703"/>
        <dbReference type="ChEBI" id="CHEBI:15378"/>
        <dbReference type="ChEBI" id="CHEBI:30616"/>
        <dbReference type="ChEBI" id="CHEBI:33019"/>
        <dbReference type="ChEBI" id="CHEBI:33384"/>
        <dbReference type="ChEBI" id="CHEBI:78442"/>
        <dbReference type="ChEBI" id="CHEBI:78533"/>
        <dbReference type="ChEBI" id="CHEBI:456215"/>
        <dbReference type="EC" id="6.1.1.11"/>
    </reaction>
</comment>
<comment type="catalytic activity">
    <reaction evidence="1">
        <text>tRNA(Sec) + L-serine + ATP = L-seryl-tRNA(Sec) + AMP + diphosphate + H(+)</text>
        <dbReference type="Rhea" id="RHEA:42580"/>
        <dbReference type="Rhea" id="RHEA-COMP:9742"/>
        <dbReference type="Rhea" id="RHEA-COMP:10128"/>
        <dbReference type="ChEBI" id="CHEBI:15378"/>
        <dbReference type="ChEBI" id="CHEBI:30616"/>
        <dbReference type="ChEBI" id="CHEBI:33019"/>
        <dbReference type="ChEBI" id="CHEBI:33384"/>
        <dbReference type="ChEBI" id="CHEBI:78442"/>
        <dbReference type="ChEBI" id="CHEBI:78533"/>
        <dbReference type="ChEBI" id="CHEBI:456215"/>
        <dbReference type="EC" id="6.1.1.11"/>
    </reaction>
</comment>
<comment type="pathway">
    <text evidence="1">Aminoacyl-tRNA biosynthesis; selenocysteinyl-tRNA(Sec) biosynthesis; L-seryl-tRNA(Sec) from L-serine and tRNA(Sec): step 1/1.</text>
</comment>
<comment type="subunit">
    <text evidence="1">Homodimer. The tRNA molecule binds across the dimer.</text>
</comment>
<comment type="subcellular location">
    <subcellularLocation>
        <location evidence="1">Cytoplasm</location>
    </subcellularLocation>
</comment>
<comment type="domain">
    <text evidence="1">Consists of two distinct domains, a catalytic core and a N-terminal extension that is involved in tRNA binding.</text>
</comment>
<comment type="similarity">
    <text evidence="1">Belongs to the class-II aminoacyl-tRNA synthetase family. Type-1 seryl-tRNA synthetase subfamily.</text>
</comment>
<gene>
    <name evidence="1" type="primary">serS</name>
    <name type="ordered locus">PSPPH_3089</name>
</gene>
<accession>Q48H74</accession>
<organism>
    <name type="scientific">Pseudomonas savastanoi pv. phaseolicola (strain 1448A / Race 6)</name>
    <name type="common">Pseudomonas syringae pv. phaseolicola (strain 1448A / Race 6)</name>
    <dbReference type="NCBI Taxonomy" id="264730"/>
    <lineage>
        <taxon>Bacteria</taxon>
        <taxon>Pseudomonadati</taxon>
        <taxon>Pseudomonadota</taxon>
        <taxon>Gammaproteobacteria</taxon>
        <taxon>Pseudomonadales</taxon>
        <taxon>Pseudomonadaceae</taxon>
        <taxon>Pseudomonas</taxon>
    </lineage>
</organism>
<proteinExistence type="inferred from homology"/>